<keyword id="KW-0030">Aminoacyl-tRNA synthetase</keyword>
<keyword id="KW-0067">ATP-binding</keyword>
<keyword id="KW-0963">Cytoplasm</keyword>
<keyword id="KW-0436">Ligase</keyword>
<keyword id="KW-0547">Nucleotide-binding</keyword>
<keyword id="KW-0648">Protein biosynthesis</keyword>
<keyword id="KW-1185">Reference proteome</keyword>
<reference key="1">
    <citation type="journal article" date="2005" name="Science">
        <title>Life at depth: Photobacterium profundum genome sequence and expression analysis.</title>
        <authorList>
            <person name="Vezzi A."/>
            <person name="Campanaro S."/>
            <person name="D'Angelo M."/>
            <person name="Simonato F."/>
            <person name="Vitulo N."/>
            <person name="Lauro F.M."/>
            <person name="Cestaro A."/>
            <person name="Malacrida G."/>
            <person name="Simionati B."/>
            <person name="Cannata N."/>
            <person name="Romualdi C."/>
            <person name="Bartlett D.H."/>
            <person name="Valle G."/>
        </authorList>
    </citation>
    <scope>NUCLEOTIDE SEQUENCE [LARGE SCALE GENOMIC DNA]</scope>
    <source>
        <strain>ATCC BAA-1253 / SS9</strain>
    </source>
</reference>
<organism>
    <name type="scientific">Photobacterium profundum (strain SS9)</name>
    <dbReference type="NCBI Taxonomy" id="298386"/>
    <lineage>
        <taxon>Bacteria</taxon>
        <taxon>Pseudomonadati</taxon>
        <taxon>Pseudomonadota</taxon>
        <taxon>Gammaproteobacteria</taxon>
        <taxon>Vibrionales</taxon>
        <taxon>Vibrionaceae</taxon>
        <taxon>Photobacterium</taxon>
    </lineage>
</organism>
<comment type="catalytic activity">
    <reaction evidence="1">
        <text>tRNA(Gly) + glycine + ATP = glycyl-tRNA(Gly) + AMP + diphosphate</text>
        <dbReference type="Rhea" id="RHEA:16013"/>
        <dbReference type="Rhea" id="RHEA-COMP:9664"/>
        <dbReference type="Rhea" id="RHEA-COMP:9683"/>
        <dbReference type="ChEBI" id="CHEBI:30616"/>
        <dbReference type="ChEBI" id="CHEBI:33019"/>
        <dbReference type="ChEBI" id="CHEBI:57305"/>
        <dbReference type="ChEBI" id="CHEBI:78442"/>
        <dbReference type="ChEBI" id="CHEBI:78522"/>
        <dbReference type="ChEBI" id="CHEBI:456215"/>
        <dbReference type="EC" id="6.1.1.14"/>
    </reaction>
</comment>
<comment type="subunit">
    <text evidence="1">Tetramer of two alpha and two beta subunits.</text>
</comment>
<comment type="subcellular location">
    <subcellularLocation>
        <location evidence="1">Cytoplasm</location>
    </subcellularLocation>
</comment>
<comment type="similarity">
    <text evidence="1">Belongs to the class-II aminoacyl-tRNA synthetase family.</text>
</comment>
<gene>
    <name evidence="1" type="primary">glyS</name>
    <name type="ordered locus">PBPRA0055</name>
</gene>
<evidence type="ECO:0000255" key="1">
    <source>
        <dbReference type="HAMAP-Rule" id="MF_00255"/>
    </source>
</evidence>
<accession>Q6LW15</accession>
<feature type="chain" id="PRO_1000006384" description="Glycine--tRNA ligase beta subunit">
    <location>
        <begin position="1"/>
        <end position="689"/>
    </location>
</feature>
<protein>
    <recommendedName>
        <fullName evidence="1">Glycine--tRNA ligase beta subunit</fullName>
        <ecNumber evidence="1">6.1.1.14</ecNumber>
    </recommendedName>
    <alternativeName>
        <fullName evidence="1">Glycyl-tRNA synthetase beta subunit</fullName>
        <shortName evidence="1">GlyRS</shortName>
    </alternativeName>
</protein>
<sequence length="689" mass="75892">MTERNFLIELGTEELPPKALRTLAEAFSSNFEAELKTAALVHQGIEWFATPRRLALKVTALATGQADSVVEKRGPAISAAFDAEGNPTKAAQGWARGNGITVEQADTLKTEKGEWLLYKQEVKGKPAQELLSGLAAAALAKLPIPKPMRWGNNEIQFIRPVKTLTMLLGDELIEGNILGADSARIIRGHRFMGEAEFTIDNADQYPAILEERGKVMANYEARKAIILEGAKKAALEVGGIADLEDELVEEVTSLVEWPVVLTASFEENFLNVPTEALVYTMKGDQKYFPVYDAEGNLIPKFIFVTNIESKDPRQIIEGNEKVVRPRLADAEFFFKTDRKRPLVDRLPELEKAIFQKQLGTIKDKTDRITELAGYIAEQIGADVTNAKRAGLLAKCDLMTSMVFEFTDTQGVMGMHYARHDGEAEDVALALYEQYMPRFAGDKLPSTGVSAAVAMADKIDTLVGIFGIGQAPKGSDPFALRRAALGVLRIIVEKDYSLDLVDLIAKARAQFGDKLTNANVEDEVIDFMLGRFRAWYQDEGHSVDVILAVLALRPTQPADFDKRVKAVSHFRSLDAAESLAAANKRVGNILAKFDGELPLAVDSSLLLEDAEKALAEKVEAMIATLAPVFAEGNYQQALSELATLREPVDAFFDNVMVMADDEKLKVNRLTMLNLLRNEFLKVADISLVQK</sequence>
<dbReference type="EC" id="6.1.1.14" evidence="1"/>
<dbReference type="EMBL" id="CR378663">
    <property type="protein sequence ID" value="CAG18510.1"/>
    <property type="molecule type" value="Genomic_DNA"/>
</dbReference>
<dbReference type="RefSeq" id="WP_011216891.1">
    <property type="nucleotide sequence ID" value="NC_006370.1"/>
</dbReference>
<dbReference type="SMR" id="Q6LW15"/>
<dbReference type="STRING" id="298386.PBPRA0055"/>
<dbReference type="KEGG" id="ppr:PBPRA0055"/>
<dbReference type="eggNOG" id="COG0751">
    <property type="taxonomic scope" value="Bacteria"/>
</dbReference>
<dbReference type="HOGENOM" id="CLU_007220_2_2_6"/>
<dbReference type="Proteomes" id="UP000000593">
    <property type="component" value="Chromosome 1"/>
</dbReference>
<dbReference type="GO" id="GO:0005829">
    <property type="term" value="C:cytosol"/>
    <property type="evidence" value="ECO:0007669"/>
    <property type="project" value="TreeGrafter"/>
</dbReference>
<dbReference type="GO" id="GO:0004814">
    <property type="term" value="F:arginine-tRNA ligase activity"/>
    <property type="evidence" value="ECO:0007669"/>
    <property type="project" value="InterPro"/>
</dbReference>
<dbReference type="GO" id="GO:0005524">
    <property type="term" value="F:ATP binding"/>
    <property type="evidence" value="ECO:0007669"/>
    <property type="project" value="UniProtKB-UniRule"/>
</dbReference>
<dbReference type="GO" id="GO:0004820">
    <property type="term" value="F:glycine-tRNA ligase activity"/>
    <property type="evidence" value="ECO:0007669"/>
    <property type="project" value="UniProtKB-UniRule"/>
</dbReference>
<dbReference type="GO" id="GO:0006420">
    <property type="term" value="P:arginyl-tRNA aminoacylation"/>
    <property type="evidence" value="ECO:0007669"/>
    <property type="project" value="InterPro"/>
</dbReference>
<dbReference type="GO" id="GO:0006426">
    <property type="term" value="P:glycyl-tRNA aminoacylation"/>
    <property type="evidence" value="ECO:0007669"/>
    <property type="project" value="UniProtKB-UniRule"/>
</dbReference>
<dbReference type="HAMAP" id="MF_00255">
    <property type="entry name" value="Gly_tRNA_synth_beta"/>
    <property type="match status" value="1"/>
</dbReference>
<dbReference type="InterPro" id="IPR008909">
    <property type="entry name" value="DALR_anticod-bd"/>
</dbReference>
<dbReference type="InterPro" id="IPR015944">
    <property type="entry name" value="Gly-tRNA-synth_bsu"/>
</dbReference>
<dbReference type="InterPro" id="IPR006194">
    <property type="entry name" value="Gly-tRNA-synth_heterodimer"/>
</dbReference>
<dbReference type="NCBIfam" id="TIGR00211">
    <property type="entry name" value="glyS"/>
    <property type="match status" value="1"/>
</dbReference>
<dbReference type="PANTHER" id="PTHR30075:SF2">
    <property type="entry name" value="GLYCINE--TRNA LIGASE, CHLOROPLASTIC_MITOCHONDRIAL 2"/>
    <property type="match status" value="1"/>
</dbReference>
<dbReference type="PANTHER" id="PTHR30075">
    <property type="entry name" value="GLYCYL-TRNA SYNTHETASE"/>
    <property type="match status" value="1"/>
</dbReference>
<dbReference type="Pfam" id="PF05746">
    <property type="entry name" value="DALR_1"/>
    <property type="match status" value="1"/>
</dbReference>
<dbReference type="Pfam" id="PF02092">
    <property type="entry name" value="tRNA_synt_2f"/>
    <property type="match status" value="1"/>
</dbReference>
<dbReference type="PRINTS" id="PR01045">
    <property type="entry name" value="TRNASYNTHGB"/>
</dbReference>
<dbReference type="SUPFAM" id="SSF109604">
    <property type="entry name" value="HD-domain/PDEase-like"/>
    <property type="match status" value="1"/>
</dbReference>
<dbReference type="PROSITE" id="PS50861">
    <property type="entry name" value="AA_TRNA_LIGASE_II_GLYAB"/>
    <property type="match status" value="1"/>
</dbReference>
<proteinExistence type="inferred from homology"/>
<name>SYGB_PHOPR</name>